<reference key="1">
    <citation type="journal article" date="2001" name="J. Biol. Chem.">
        <title>Ponericins, new antibacterial and insecticidal peptides from the venom of the ant Pachycondyla goeldii.</title>
        <authorList>
            <person name="Orivel J."/>
            <person name="Redeker V."/>
            <person name="Le Caer J.-P."/>
            <person name="Krier F."/>
            <person name="Revol-Junelles A.-M."/>
            <person name="Longeon A."/>
            <person name="Chafotte A."/>
            <person name="Dejean A."/>
            <person name="Rossier J."/>
        </authorList>
    </citation>
    <scope>PROTEIN SEQUENCE</scope>
    <scope>FUNCTION</scope>
    <scope>SUBCELLULAR LOCATION</scope>
    <scope>MASS SPECTROMETRY</scope>
    <source>
        <tissue>Venom</tissue>
    </source>
</reference>
<reference key="2">
    <citation type="journal article" date="2016" name="Toxins">
        <title>The biochemical toxin arsenal from ant venoms.</title>
        <authorList>
            <person name="Touchard A."/>
            <person name="Aili S.R."/>
            <person name="Fox E.G."/>
            <person name="Escoubas P."/>
            <person name="Orivel J."/>
            <person name="Nicholson G.M."/>
            <person name="Dejean A."/>
        </authorList>
    </citation>
    <scope>REVIEW</scope>
    <scope>NOMENCLATURE</scope>
</reference>
<comment type="function">
    <text evidence="1 4">Has a broad spectrum of activity against both Gram-positive and Gram-negative bacteria and S.cerevisiae. Has insecticidal and hemolytic activities (PubMed:11279030). May act by disrupting the integrity of the bacterial cell membrane (Probable).</text>
</comment>
<comment type="subcellular location">
    <subcellularLocation>
        <location evidence="1">Secreted</location>
    </subcellularLocation>
    <subcellularLocation>
        <location evidence="4">Target cell membrane</location>
    </subcellularLocation>
</comment>
<comment type="tissue specificity">
    <text evidence="5">Expressed by the venom gland.</text>
</comment>
<comment type="mass spectrometry"/>
<comment type="similarity">
    <text evidence="4">Belongs to the non-disulfide-bridged peptide (NDBP) superfamily. Medium-length antimicrobial peptide (group 3) family. Ponericin-W subfamily.</text>
</comment>
<feature type="peptide" id="PRO_0000044194" description="M-poneritoxin-Ng1a" evidence="1">
    <location>
        <begin position="1"/>
        <end position="25"/>
    </location>
</feature>
<proteinExistence type="evidence at protein level"/>
<protein>
    <recommendedName>
        <fullName evidence="3">M-poneritoxin-Ng1a</fullName>
        <shortName evidence="3">M-PONTX-Ng1a</shortName>
    </recommendedName>
    <alternativeName>
        <fullName evidence="4">Poneratoxin</fullName>
    </alternativeName>
    <alternativeName>
        <fullName evidence="2">Ponericin-W1</fullName>
    </alternativeName>
</protein>
<evidence type="ECO:0000269" key="1">
    <source>
    </source>
</evidence>
<evidence type="ECO:0000303" key="2">
    <source>
    </source>
</evidence>
<evidence type="ECO:0000303" key="3">
    <source>
    </source>
</evidence>
<evidence type="ECO:0000305" key="4"/>
<evidence type="ECO:0000305" key="5">
    <source>
    </source>
</evidence>
<dbReference type="GO" id="GO:0005576">
    <property type="term" value="C:extracellular region"/>
    <property type="evidence" value="ECO:0007669"/>
    <property type="project" value="UniProtKB-SubCell"/>
</dbReference>
<dbReference type="GO" id="GO:0016020">
    <property type="term" value="C:membrane"/>
    <property type="evidence" value="ECO:0007669"/>
    <property type="project" value="UniProtKB-KW"/>
</dbReference>
<dbReference type="GO" id="GO:0044218">
    <property type="term" value="C:other organism cell membrane"/>
    <property type="evidence" value="ECO:0007669"/>
    <property type="project" value="UniProtKB-KW"/>
</dbReference>
<dbReference type="GO" id="GO:0090729">
    <property type="term" value="F:toxin activity"/>
    <property type="evidence" value="ECO:0007669"/>
    <property type="project" value="UniProtKB-KW"/>
</dbReference>
<dbReference type="GO" id="GO:0042742">
    <property type="term" value="P:defense response to bacterium"/>
    <property type="evidence" value="ECO:0007669"/>
    <property type="project" value="UniProtKB-KW"/>
</dbReference>
<dbReference type="GO" id="GO:0050832">
    <property type="term" value="P:defense response to fungus"/>
    <property type="evidence" value="ECO:0007669"/>
    <property type="project" value="UniProtKB-KW"/>
</dbReference>
<dbReference type="GO" id="GO:0031640">
    <property type="term" value="P:killing of cells of another organism"/>
    <property type="evidence" value="ECO:0007669"/>
    <property type="project" value="UniProtKB-KW"/>
</dbReference>
<dbReference type="InterPro" id="IPR012523">
    <property type="entry name" value="Antimicrobial_4"/>
</dbReference>
<dbReference type="Pfam" id="PF08024">
    <property type="entry name" value="Antimicrobial_4"/>
    <property type="match status" value="1"/>
</dbReference>
<accession>P82423</accession>
<keyword id="KW-0044">Antibiotic</keyword>
<keyword id="KW-0929">Antimicrobial</keyword>
<keyword id="KW-0204">Cytolysis</keyword>
<keyword id="KW-0903">Direct protein sequencing</keyword>
<keyword id="KW-0295">Fungicide</keyword>
<keyword id="KW-0354">Hemolysis</keyword>
<keyword id="KW-0472">Membrane</keyword>
<keyword id="KW-0964">Secreted</keyword>
<keyword id="KW-1052">Target cell membrane</keyword>
<keyword id="KW-1053">Target membrane</keyword>
<keyword id="KW-0800">Toxin</keyword>
<organism>
    <name type="scientific">Neoponera goeldii</name>
    <name type="common">Ponerine ant</name>
    <name type="synonym">Pachycondyla goeldii</name>
    <dbReference type="NCBI Taxonomy" id="3057131"/>
    <lineage>
        <taxon>Eukaryota</taxon>
        <taxon>Metazoa</taxon>
        <taxon>Ecdysozoa</taxon>
        <taxon>Arthropoda</taxon>
        <taxon>Hexapoda</taxon>
        <taxon>Insecta</taxon>
        <taxon>Pterygota</taxon>
        <taxon>Neoptera</taxon>
        <taxon>Endopterygota</taxon>
        <taxon>Hymenoptera</taxon>
        <taxon>Apocrita</taxon>
        <taxon>Aculeata</taxon>
        <taxon>Formicoidea</taxon>
        <taxon>Formicidae</taxon>
        <taxon>Ponerinae</taxon>
        <taxon>Ponerini</taxon>
        <taxon>Neoponera</taxon>
    </lineage>
</organism>
<sequence>WLGSALKIGAKLLPSVVGLFKKKKQ</sequence>
<name>WTX1A_NEOGO</name>